<name>HCMB_AQUTE</name>
<keyword id="KW-0002">3D-structure</keyword>
<keyword id="KW-0846">Cobalamin</keyword>
<keyword id="KW-0170">Cobalt</keyword>
<keyword id="KW-0413">Isomerase</keyword>
<keyword id="KW-0479">Metal-binding</keyword>
<protein>
    <recommendedName>
        <fullName evidence="5">2-hydroxyisobutanoyl-CoA mutase small subunit</fullName>
        <ecNumber evidence="2 3">5.4.99.64</ecNumber>
    </recommendedName>
    <alternativeName>
        <fullName evidence="4">2-hydroxyisobutyryl-CoA mutase small subunit</fullName>
        <shortName evidence="4">HCM small subunit</shortName>
    </alternativeName>
</protein>
<accession>I3VE74</accession>
<reference key="1">
    <citation type="journal article" date="2012" name="J. Biol. Chem.">
        <title>Bacterial acyl-CoA mutase specifically catalyzes coenzyme B12-dependent isomerization of 2-hydroxyisobutyryl-CoA and (S)-3-hydroxybutyryl-CoA.</title>
        <authorList>
            <person name="Yaneva N."/>
            <person name="Schuster J."/>
            <person name="Schafer F."/>
            <person name="Lede V."/>
            <person name="Przybylski D."/>
            <person name="Paproth T."/>
            <person name="Harms H."/>
            <person name="Muller R.H."/>
            <person name="Rohwerder T."/>
        </authorList>
    </citation>
    <scope>NUCLEOTIDE SEQUENCE [GENOMIC DNA]</scope>
    <scope>FUNCTION</scope>
    <scope>CATALYTIC ACTIVITY</scope>
    <scope>BIOPHYSICOCHEMICAL PROPERTIES</scope>
    <scope>SUBUNIT</scope>
    <scope>DISRUPTION PHENOTYPE</scope>
    <source>
        <strain>L108</strain>
    </source>
</reference>
<reference evidence="6" key="2">
    <citation type="journal article" date="2015" name="J. Biol. Chem.">
        <title>Structural basis of the stereospecificity of bacterial B12-dependent 2-hydroxyisobutyryl-CoA mutase.</title>
        <authorList>
            <person name="Kurteva-Yaneva N."/>
            <person name="Zahn M."/>
            <person name="Weichler M.T."/>
            <person name="Starke R."/>
            <person name="Harms H."/>
            <person name="Muller R.H."/>
            <person name="Strater N."/>
            <person name="Rohwerder T."/>
        </authorList>
    </citation>
    <scope>X-RAY CRYSTALLOGRAPHY (2.50 ANGSTROMS) IN COMPLEX WITH HCMA; 2-HYDROXYISOBUTANOYL-COA; 3-HYDROXYBUTANOYL-COA AND COBALAMIN</scope>
    <scope>FUNCTION</scope>
    <scope>CATALYTIC ACTIVITY</scope>
    <scope>COFACTOR</scope>
    <scope>BIOPHYSICOCHEMICAL PROPERTIES</scope>
    <scope>SUBUNIT</scope>
    <source>
        <strain>L108</strain>
    </source>
</reference>
<organism>
    <name type="scientific">Aquincola tertiaricarbonis</name>
    <dbReference type="NCBI Taxonomy" id="391953"/>
    <lineage>
        <taxon>Bacteria</taxon>
        <taxon>Pseudomonadati</taxon>
        <taxon>Pseudomonadota</taxon>
        <taxon>Betaproteobacteria</taxon>
        <taxon>Burkholderiales</taxon>
        <taxon>Sphaerotilaceae</taxon>
        <taxon>Aquincola</taxon>
    </lineage>
</organism>
<comment type="function">
    <text evidence="2 3">Together with HcmA, catalyzes the isomerization of 2-hydroxyisobutyryl-CoA and 3-hydroxybutyryl-CoA. Is specific for 2-hydroxyisobutyryl-CoA and (S)-3-hydroxybutyryl-CoA, and shows only very low activity with (R)-3-hydroxybutyryl-CoA, isobutyryl-CoA and butyryl-CoA (PubMed:22433853, PubMed:25720495). In vitro, can isomerize pivalyl-CoA and isovaleryl-CoA, with much lower efficiency (PubMed:25720495). Plays a central role in the degradation of substrates bearing a tert-butyl moiety, such as the fuel oxygenate methyl tert-butyl ether (MTBE) and its metabolites (PubMed:22433853).</text>
</comment>
<comment type="catalytic activity">
    <reaction evidence="2 3">
        <text>2-hydroxyisobutanoyl-CoA = (3S)-3-hydroxybutanoyl-CoA</text>
        <dbReference type="Rhea" id="RHEA:49592"/>
        <dbReference type="ChEBI" id="CHEBI:57316"/>
        <dbReference type="ChEBI" id="CHEBI:131780"/>
        <dbReference type="EC" id="5.4.99.64"/>
    </reaction>
    <physiologicalReaction direction="left-to-right" evidence="2">
        <dbReference type="Rhea" id="RHEA:49593"/>
    </physiologicalReaction>
</comment>
<comment type="cofactor">
    <cofactor evidence="3">
        <name>adenosylcob(III)alamin</name>
        <dbReference type="ChEBI" id="CHEBI:18408"/>
    </cofactor>
</comment>
<comment type="biophysicochemical properties">
    <kinetics>
        <KM evidence="2">128 uM for (S)-3-hydroxybutyryl-CoA</KM>
        <KM evidence="2">104 uM for 2-hydroxyisobutyryl-CoA</KM>
        <KM evidence="2">1660 uM for (R)-3-hydroxybutyryl-CoA</KM>
        <KM evidence="2">3340 uM for butyryl-CoA</KM>
        <KM evidence="2">550 uM for isobutyryl-CoA</KM>
        <KM evidence="3">374 uM for pivalyl-CoA</KM>
        <KM evidence="3">288 uM for isovaleryl-CoA</KM>
        <Vmax evidence="2">140.0 nmol/min/mg enzyme with (S)-3-hydroxybutyryl-CoA as substrate</Vmax>
        <Vmax evidence="2">36.0 nmol/min/mg enzyme with 2-hydroxyisobutyryl-CoA as substrate</Vmax>
        <Vmax evidence="2">2.4 nmol/min/mg enzyme with (R)-3-hydroxybutyryl-CoA as substrate</Vmax>
        <Vmax evidence="2">2.4 nmol/min/mg enzyme with butyryl-CoA as substrate</Vmax>
        <Vmax evidence="2">0.67 nmol/min/mg enzyme with isobutyryl-CoA as substrate</Vmax>
        <Vmax evidence="3">11.8 nmol/min/mg enzyme with pivalyl-CoA as substrate</Vmax>
        <Vmax evidence="3">8.2 nmol/min/mg enzyme with isovaleryl-CoA as substrate</Vmax>
        <text evidence="2 3">kcat is 12 min(-1) with (S)-3-hydroxybutyryl-CoA as substrate. kcat is 3.0 min(-1) with 2-hydroxyisobutyryl-CoA as substrate. kcat is 0.20 min(-1) with (R)-3-hydroxybutyryl-CoA as substrate. kcat is 0.20 min(-1) with butyryl-CoA as substrate. kcat is 0.06 min(-1) with isobutyryl-CoA as substrate (PubMed:22433853). kcat is 0.98 min(-1) with pivalyl-CoA as substrate. kcat is 0.68 min(-1) with isovaleryl-CoA as substrate (PubMed:25720495).</text>
    </kinetics>
    <phDependence>
        <text evidence="2">Optimum pH is 6.6.</text>
    </phDependence>
    <temperatureDependence>
        <text evidence="2">Optimum temperature is 30 degrees Celsius.</text>
    </temperatureDependence>
</comment>
<comment type="subunit">
    <text evidence="2 3">Homotetramer composed of two large substrate-binding subunits (HcmA) and two small cobalamin-binding subunits (HcmB).</text>
</comment>
<comment type="disruption phenotype">
    <text evidence="2">Insertion mutant cannot grow on 2-hydroxyisobutyric acid (2-HIBA).</text>
</comment>
<comment type="similarity">
    <text evidence="5">Belongs to the acyl-CoA mutase small subunit family.</text>
</comment>
<dbReference type="EC" id="5.4.99.64" evidence="2 3"/>
<dbReference type="EMBL" id="JQ708092">
    <property type="protein sequence ID" value="AFK77665.1"/>
    <property type="molecule type" value="Genomic_DNA"/>
</dbReference>
<dbReference type="PDB" id="4R3U">
    <property type="method" value="X-ray"/>
    <property type="resolution" value="2.50 A"/>
    <property type="chains" value="C/D=1-136"/>
</dbReference>
<dbReference type="PDBsum" id="4R3U"/>
<dbReference type="SMR" id="I3VE74"/>
<dbReference type="KEGG" id="ag:AFK77665"/>
<dbReference type="BioCyc" id="MetaCyc:MONOMER-19835"/>
<dbReference type="BRENDA" id="5.4.99.64">
    <property type="organism ID" value="14508"/>
</dbReference>
<dbReference type="EvolutionaryTrace" id="I3VE74"/>
<dbReference type="GO" id="GO:0031419">
    <property type="term" value="F:cobalamin binding"/>
    <property type="evidence" value="ECO:0007669"/>
    <property type="project" value="UniProtKB-KW"/>
</dbReference>
<dbReference type="GO" id="GO:0016853">
    <property type="term" value="F:isomerase activity"/>
    <property type="evidence" value="ECO:0007669"/>
    <property type="project" value="UniProtKB-KW"/>
</dbReference>
<dbReference type="GO" id="GO:0046872">
    <property type="term" value="F:metal ion binding"/>
    <property type="evidence" value="ECO:0007669"/>
    <property type="project" value="UniProtKB-KW"/>
</dbReference>
<dbReference type="CDD" id="cd02071">
    <property type="entry name" value="MM_CoA_mut_B12_BD"/>
    <property type="match status" value="1"/>
</dbReference>
<dbReference type="Gene3D" id="3.40.50.280">
    <property type="entry name" value="Cobalamin-binding domain"/>
    <property type="match status" value="1"/>
</dbReference>
<dbReference type="InterPro" id="IPR006159">
    <property type="entry name" value="Acid_CoA_mut_C"/>
</dbReference>
<dbReference type="InterPro" id="IPR006158">
    <property type="entry name" value="Cobalamin-bd"/>
</dbReference>
<dbReference type="InterPro" id="IPR036724">
    <property type="entry name" value="Cobalamin-bd_sf"/>
</dbReference>
<dbReference type="NCBIfam" id="TIGR00640">
    <property type="entry name" value="acid_CoA_mut_C"/>
    <property type="match status" value="1"/>
</dbReference>
<dbReference type="PANTHER" id="PTHR48101:SF3">
    <property type="entry name" value="COENZYME B12-DEPENDENT MUTASE"/>
    <property type="match status" value="1"/>
</dbReference>
<dbReference type="PANTHER" id="PTHR48101">
    <property type="entry name" value="METHYLMALONYL-COA MUTASE, MITOCHONDRIAL-RELATED"/>
    <property type="match status" value="1"/>
</dbReference>
<dbReference type="Pfam" id="PF02310">
    <property type="entry name" value="B12-binding"/>
    <property type="match status" value="1"/>
</dbReference>
<dbReference type="SUPFAM" id="SSF52242">
    <property type="entry name" value="Cobalamin (vitamin B12)-binding domain"/>
    <property type="match status" value="1"/>
</dbReference>
<dbReference type="PROSITE" id="PS51332">
    <property type="entry name" value="B12_BINDING"/>
    <property type="match status" value="1"/>
</dbReference>
<gene>
    <name evidence="4" type="primary">hcmB</name>
</gene>
<evidence type="ECO:0000255" key="1">
    <source>
        <dbReference type="PROSITE-ProRule" id="PRU00666"/>
    </source>
</evidence>
<evidence type="ECO:0000269" key="2">
    <source>
    </source>
</evidence>
<evidence type="ECO:0000269" key="3">
    <source>
    </source>
</evidence>
<evidence type="ECO:0000303" key="4">
    <source>
    </source>
</evidence>
<evidence type="ECO:0000305" key="5"/>
<evidence type="ECO:0007744" key="6">
    <source>
        <dbReference type="PDB" id="4R3U"/>
    </source>
</evidence>
<evidence type="ECO:0007829" key="7">
    <source>
        <dbReference type="PDB" id="4R3U"/>
    </source>
</evidence>
<proteinExistence type="evidence at protein level"/>
<feature type="chain" id="PRO_0000455119" description="2-hydroxyisobutanoyl-CoA mutase small subunit">
    <location>
        <begin position="1"/>
        <end position="136"/>
    </location>
</feature>
<feature type="domain" description="B12-binding" evidence="1">
    <location>
        <begin position="5"/>
        <end position="133"/>
    </location>
</feature>
<feature type="binding site" description="axial binding residue" evidence="3 6">
    <location>
        <position position="18"/>
    </location>
    <ligand>
        <name>adenosylcob(III)alamin</name>
        <dbReference type="ChEBI" id="CHEBI:18408"/>
    </ligand>
    <ligandPart>
        <name>Co</name>
        <dbReference type="ChEBI" id="CHEBI:27638"/>
    </ligandPart>
</feature>
<feature type="strand" evidence="7">
    <location>
        <begin position="7"/>
        <end position="11"/>
    </location>
</feature>
<feature type="helix" evidence="7">
    <location>
        <begin position="20"/>
        <end position="31"/>
    </location>
</feature>
<feature type="strand" evidence="7">
    <location>
        <begin position="35"/>
        <end position="38"/>
    </location>
</feature>
<feature type="strand" evidence="7">
    <location>
        <begin position="41"/>
        <end position="43"/>
    </location>
</feature>
<feature type="helix" evidence="7">
    <location>
        <begin position="45"/>
        <end position="54"/>
    </location>
</feature>
<feature type="strand" evidence="7">
    <location>
        <begin position="58"/>
        <end position="64"/>
    </location>
</feature>
<feature type="helix" evidence="7">
    <location>
        <begin position="69"/>
        <end position="82"/>
    </location>
</feature>
<feature type="strand" evidence="7">
    <location>
        <begin position="88"/>
        <end position="94"/>
    </location>
</feature>
<feature type="helix" evidence="7">
    <location>
        <begin position="98"/>
        <end position="105"/>
    </location>
</feature>
<feature type="turn" evidence="7">
    <location>
        <begin position="106"/>
        <end position="108"/>
    </location>
</feature>
<feature type="strand" evidence="7">
    <location>
        <begin position="111"/>
        <end position="114"/>
    </location>
</feature>
<feature type="helix" evidence="7">
    <location>
        <begin position="119"/>
        <end position="132"/>
    </location>
</feature>
<sequence>MDQTPIRVLLAKVGLDGHDRGVKVVARALRDAGMDVIYSGLHRTPEEVVNTAIQEDVDVLGVSLLSGVQLTVFPKIFKLLDERGAGDLIVIAGGVMPDEDAAAIRKLGVREVLLQDTPPQAIIDSIRSLVAARGAR</sequence>